<dbReference type="EC" id="3.6.4.-"/>
<dbReference type="EMBL" id="AF076776">
    <property type="protein sequence ID" value="AAF82185.1"/>
    <property type="molecule type" value="mRNA"/>
</dbReference>
<dbReference type="EMBL" id="AF254373">
    <property type="protein sequence ID" value="AAK53539.1"/>
    <property type="molecule type" value="mRNA"/>
</dbReference>
<dbReference type="EMBL" id="AE013599">
    <property type="protein sequence ID" value="AAM70871.1"/>
    <property type="molecule type" value="Genomic_DNA"/>
</dbReference>
<dbReference type="EMBL" id="AE013599">
    <property type="protein sequence ID" value="AAM70872.2"/>
    <property type="molecule type" value="Genomic_DNA"/>
</dbReference>
<dbReference type="EMBL" id="AY058653">
    <property type="protein sequence ID" value="AAL13882.1"/>
    <property type="status" value="ALT_INIT"/>
    <property type="molecule type" value="mRNA"/>
</dbReference>
<dbReference type="RefSeq" id="NP_524833.2">
    <molecule id="Q9NDJ2-1"/>
    <property type="nucleotide sequence ID" value="NM_080094.4"/>
</dbReference>
<dbReference type="RefSeq" id="NP_788424.1">
    <molecule id="Q9NDJ2-2"/>
    <property type="nucleotide sequence ID" value="NM_176244.3"/>
</dbReference>
<dbReference type="SMR" id="Q9NDJ2"/>
<dbReference type="BioGRID" id="69802">
    <property type="interactions" value="99"/>
</dbReference>
<dbReference type="ComplexPortal" id="CPX-2264">
    <molecule id="Q9NDJ2-1"/>
    <property type="entry name" value="NuA4 histone acetyltransferase complex"/>
</dbReference>
<dbReference type="ComplexPortal" id="CPX-2423">
    <molecule id="Q9NDJ2-2"/>
    <property type="entry name" value="SWR1 chromatin remodelling complex"/>
</dbReference>
<dbReference type="DIP" id="DIP-60953N"/>
<dbReference type="FunCoup" id="Q9NDJ2">
    <property type="interactions" value="2053"/>
</dbReference>
<dbReference type="IntAct" id="Q9NDJ2">
    <property type="interactions" value="15"/>
</dbReference>
<dbReference type="STRING" id="7227.FBpp0309691"/>
<dbReference type="GlyGen" id="Q9NDJ2">
    <property type="glycosylation" value="3 sites"/>
</dbReference>
<dbReference type="iPTMnet" id="Q9NDJ2"/>
<dbReference type="PaxDb" id="7227-FBpp0071529"/>
<dbReference type="EnsemblMetazoa" id="FBtr0071603">
    <molecule id="Q9NDJ2-1"/>
    <property type="protein sequence ID" value="FBpp0071529"/>
    <property type="gene ID" value="FBgn0020306"/>
</dbReference>
<dbReference type="EnsemblMetazoa" id="FBtr0071604">
    <molecule id="Q9NDJ2-2"/>
    <property type="protein sequence ID" value="FBpp0071530"/>
    <property type="gene ID" value="FBgn0020306"/>
</dbReference>
<dbReference type="GeneID" id="45655"/>
<dbReference type="KEGG" id="dme:Dmel_CG9696"/>
<dbReference type="UCSC" id="CG9696-RA">
    <molecule id="Q9NDJ2-1"/>
    <property type="organism name" value="d. melanogaster"/>
</dbReference>
<dbReference type="AGR" id="FB:FBgn0020306"/>
<dbReference type="CTD" id="45655"/>
<dbReference type="FlyBase" id="FBgn0020306">
    <property type="gene designation" value="dom"/>
</dbReference>
<dbReference type="VEuPathDB" id="VectorBase:FBgn0020306"/>
<dbReference type="eggNOG" id="KOG0391">
    <property type="taxonomic scope" value="Eukaryota"/>
</dbReference>
<dbReference type="GeneTree" id="ENSGT00940000167340"/>
<dbReference type="InParanoid" id="Q9NDJ2"/>
<dbReference type="OrthoDB" id="372624at2759"/>
<dbReference type="PhylomeDB" id="Q9NDJ2"/>
<dbReference type="SignaLink" id="Q9NDJ2"/>
<dbReference type="BioGRID-ORCS" id="45655">
    <property type="hits" value="0 hits in 3 CRISPR screens"/>
</dbReference>
<dbReference type="ChiTaRS" id="jumu">
    <property type="organism name" value="fly"/>
</dbReference>
<dbReference type="GenomeRNAi" id="45655"/>
<dbReference type="PRO" id="PR:Q9NDJ2"/>
<dbReference type="Proteomes" id="UP000000803">
    <property type="component" value="Chromosome 2R"/>
</dbReference>
<dbReference type="Bgee" id="FBgn0020306">
    <property type="expression patterns" value="Expressed in enteroblast (Drosophila) in digestive tract and 234 other cell types or tissues"/>
</dbReference>
<dbReference type="ExpressionAtlas" id="Q9NDJ2">
    <property type="expression patterns" value="baseline and differential"/>
</dbReference>
<dbReference type="GO" id="GO:0000123">
    <property type="term" value="C:histone acetyltransferase complex"/>
    <property type="evidence" value="ECO:0000353"/>
    <property type="project" value="FlyBase"/>
</dbReference>
<dbReference type="GO" id="GO:0035267">
    <property type="term" value="C:NuA4 histone acetyltransferase complex"/>
    <property type="evidence" value="ECO:0000314"/>
    <property type="project" value="FlyBase"/>
</dbReference>
<dbReference type="GO" id="GO:0005634">
    <property type="term" value="C:nucleus"/>
    <property type="evidence" value="ECO:0000314"/>
    <property type="project" value="FlyBase"/>
</dbReference>
<dbReference type="GO" id="GO:0000812">
    <property type="term" value="C:Swr1 complex"/>
    <property type="evidence" value="ECO:0000318"/>
    <property type="project" value="GO_Central"/>
</dbReference>
<dbReference type="GO" id="GO:0005524">
    <property type="term" value="F:ATP binding"/>
    <property type="evidence" value="ECO:0007669"/>
    <property type="project" value="UniProtKB-KW"/>
</dbReference>
<dbReference type="GO" id="GO:0016887">
    <property type="term" value="F:ATP hydrolysis activity"/>
    <property type="evidence" value="ECO:0000318"/>
    <property type="project" value="GO_Central"/>
</dbReference>
<dbReference type="GO" id="GO:0008094">
    <property type="term" value="F:ATP-dependent activity, acting on DNA"/>
    <property type="evidence" value="ECO:0000250"/>
    <property type="project" value="FlyBase"/>
</dbReference>
<dbReference type="GO" id="GO:0140849">
    <property type="term" value="F:ATP-dependent H2AZ histone chaperone activity"/>
    <property type="evidence" value="ECO:0000315"/>
    <property type="project" value="FlyBase"/>
</dbReference>
<dbReference type="GO" id="GO:0003677">
    <property type="term" value="F:DNA binding"/>
    <property type="evidence" value="ECO:0007669"/>
    <property type="project" value="UniProtKB-KW"/>
</dbReference>
<dbReference type="GO" id="GO:0004386">
    <property type="term" value="F:helicase activity"/>
    <property type="evidence" value="ECO:0007669"/>
    <property type="project" value="UniProtKB-KW"/>
</dbReference>
<dbReference type="GO" id="GO:0042393">
    <property type="term" value="F:histone binding"/>
    <property type="evidence" value="ECO:0000318"/>
    <property type="project" value="GO_Central"/>
</dbReference>
<dbReference type="GO" id="GO:0140713">
    <property type="term" value="F:histone chaperone activity"/>
    <property type="evidence" value="ECO:0000314"/>
    <property type="project" value="FlyBase"/>
</dbReference>
<dbReference type="GO" id="GO:0006325">
    <property type="term" value="P:chromatin organization"/>
    <property type="evidence" value="ECO:0000315"/>
    <property type="project" value="FlyBase"/>
</dbReference>
<dbReference type="GO" id="GO:0006338">
    <property type="term" value="P:chromatin remodeling"/>
    <property type="evidence" value="ECO:0000315"/>
    <property type="project" value="FlyBase"/>
</dbReference>
<dbReference type="GO" id="GO:0070983">
    <property type="term" value="P:dendrite guidance"/>
    <property type="evidence" value="ECO:0000315"/>
    <property type="project" value="FlyBase"/>
</dbReference>
<dbReference type="GO" id="GO:0048813">
    <property type="term" value="P:dendrite morphogenesis"/>
    <property type="evidence" value="ECO:0000315"/>
    <property type="project" value="FlyBase"/>
</dbReference>
<dbReference type="GO" id="GO:0140861">
    <property type="term" value="P:DNA repair-dependent chromatin remodeling"/>
    <property type="evidence" value="ECO:0000314"/>
    <property type="project" value="FlyBase"/>
</dbReference>
<dbReference type="GO" id="GO:0030097">
    <property type="term" value="P:hemopoiesis"/>
    <property type="evidence" value="ECO:0000304"/>
    <property type="project" value="FlyBase"/>
</dbReference>
<dbReference type="GO" id="GO:0036098">
    <property type="term" value="P:male germ-line stem cell population maintenance"/>
    <property type="evidence" value="ECO:0000315"/>
    <property type="project" value="FlyBase"/>
</dbReference>
<dbReference type="GO" id="GO:0010629">
    <property type="term" value="P:negative regulation of gene expression"/>
    <property type="evidence" value="ECO:0000315"/>
    <property type="project" value="FlyBase"/>
</dbReference>
<dbReference type="GO" id="GO:0035207">
    <property type="term" value="P:negative regulation of hemocyte proliferation"/>
    <property type="evidence" value="ECO:0000304"/>
    <property type="project" value="FlyBase"/>
</dbReference>
<dbReference type="GO" id="GO:0048477">
    <property type="term" value="P:oogenesis"/>
    <property type="evidence" value="ECO:0000315"/>
    <property type="project" value="FlyBase"/>
</dbReference>
<dbReference type="GO" id="GO:0000381">
    <property type="term" value="P:regulation of alternative mRNA splicing, via spliceosome"/>
    <property type="evidence" value="ECO:0007001"/>
    <property type="project" value="FlyBase"/>
</dbReference>
<dbReference type="GO" id="GO:0035019">
    <property type="term" value="P:somatic stem cell population maintenance"/>
    <property type="evidence" value="ECO:0000315"/>
    <property type="project" value="FlyBase"/>
</dbReference>
<dbReference type="GO" id="GO:0045815">
    <property type="term" value="P:transcription initiation-coupled chromatin remodeling"/>
    <property type="evidence" value="ECO:0000315"/>
    <property type="project" value="FlyBase"/>
</dbReference>
<dbReference type="GO" id="GO:0035222">
    <property type="term" value="P:wing disc pattern formation"/>
    <property type="evidence" value="ECO:0000316"/>
    <property type="project" value="FlyBase"/>
</dbReference>
<dbReference type="CDD" id="cd18003">
    <property type="entry name" value="DEXQc_SRCAP"/>
    <property type="match status" value="1"/>
</dbReference>
<dbReference type="CDD" id="cd18793">
    <property type="entry name" value="SF2_C_SNF"/>
    <property type="match status" value="1"/>
</dbReference>
<dbReference type="FunFam" id="3.40.50.300:FF:000529">
    <property type="entry name" value="helicase SRCAP isoform X1"/>
    <property type="match status" value="1"/>
</dbReference>
<dbReference type="FunFam" id="3.40.50.10810:FF:000005">
    <property type="entry name" value="Photoperiod-independent early flowering 1"/>
    <property type="match status" value="1"/>
</dbReference>
<dbReference type="FunFam" id="1.20.120.850:FF:000012">
    <property type="entry name" value="protein PHOTOPERIOD-INDEPENDENT EARLY FLOWERING 1 isoform X3"/>
    <property type="match status" value="1"/>
</dbReference>
<dbReference type="Gene3D" id="3.40.50.300">
    <property type="entry name" value="P-loop containing nucleotide triphosphate hydrolases"/>
    <property type="match status" value="1"/>
</dbReference>
<dbReference type="Gene3D" id="1.20.120.850">
    <property type="entry name" value="SWI2/SNF2 ATPases, N-terminal domain"/>
    <property type="match status" value="1"/>
</dbReference>
<dbReference type="Gene3D" id="3.40.50.10810">
    <property type="entry name" value="Tandem AAA-ATPase domain"/>
    <property type="match status" value="1"/>
</dbReference>
<dbReference type="InterPro" id="IPR014001">
    <property type="entry name" value="Helicase_ATP-bd"/>
</dbReference>
<dbReference type="InterPro" id="IPR001650">
    <property type="entry name" value="Helicase_C-like"/>
</dbReference>
<dbReference type="InterPro" id="IPR014012">
    <property type="entry name" value="HSA_dom"/>
</dbReference>
<dbReference type="InterPro" id="IPR050520">
    <property type="entry name" value="INO80/SWR1_helicase"/>
</dbReference>
<dbReference type="InterPro" id="IPR027417">
    <property type="entry name" value="P-loop_NTPase"/>
</dbReference>
<dbReference type="InterPro" id="IPR001005">
    <property type="entry name" value="SANT/Myb"/>
</dbReference>
<dbReference type="InterPro" id="IPR038718">
    <property type="entry name" value="SNF2-like_sf"/>
</dbReference>
<dbReference type="InterPro" id="IPR049730">
    <property type="entry name" value="SNF2/RAD54-like_C"/>
</dbReference>
<dbReference type="InterPro" id="IPR000330">
    <property type="entry name" value="SNF2_N"/>
</dbReference>
<dbReference type="PANTHER" id="PTHR45685:SF1">
    <property type="entry name" value="HELICASE SRCAP"/>
    <property type="match status" value="1"/>
</dbReference>
<dbReference type="PANTHER" id="PTHR45685">
    <property type="entry name" value="HELICASE SRCAP-RELATED"/>
    <property type="match status" value="1"/>
</dbReference>
<dbReference type="Pfam" id="PF00271">
    <property type="entry name" value="Helicase_C"/>
    <property type="match status" value="1"/>
</dbReference>
<dbReference type="Pfam" id="PF07529">
    <property type="entry name" value="HSA"/>
    <property type="match status" value="1"/>
</dbReference>
<dbReference type="Pfam" id="PF00176">
    <property type="entry name" value="SNF2-rel_dom"/>
    <property type="match status" value="1"/>
</dbReference>
<dbReference type="SMART" id="SM00487">
    <property type="entry name" value="DEXDc"/>
    <property type="match status" value="1"/>
</dbReference>
<dbReference type="SMART" id="SM00490">
    <property type="entry name" value="HELICc"/>
    <property type="match status" value="1"/>
</dbReference>
<dbReference type="SMART" id="SM00573">
    <property type="entry name" value="HSA"/>
    <property type="match status" value="1"/>
</dbReference>
<dbReference type="SUPFAM" id="SSF52540">
    <property type="entry name" value="P-loop containing nucleoside triphosphate hydrolases"/>
    <property type="match status" value="2"/>
</dbReference>
<dbReference type="PROSITE" id="PS51192">
    <property type="entry name" value="HELICASE_ATP_BIND_1"/>
    <property type="match status" value="1"/>
</dbReference>
<dbReference type="PROSITE" id="PS51194">
    <property type="entry name" value="HELICASE_CTER"/>
    <property type="match status" value="1"/>
</dbReference>
<dbReference type="PROSITE" id="PS51204">
    <property type="entry name" value="HSA"/>
    <property type="match status" value="1"/>
</dbReference>
<dbReference type="PROSITE" id="PS50090">
    <property type="entry name" value="MYB_LIKE"/>
    <property type="match status" value="1"/>
</dbReference>
<reference key="1">
    <citation type="journal article" date="2001" name="Development">
        <title>The domino gene of Drosophila encodes novel members of the SWI2/SNF2 family of DNA-dependent ATPases, which contribute to the silencing of homeotic genes.</title>
        <authorList>
            <person name="Ruhf M.-L."/>
            <person name="Braun A."/>
            <person name="Papoulas O."/>
            <person name="Tamkun J.W."/>
            <person name="Randsholt N."/>
            <person name="Meister M."/>
        </authorList>
    </citation>
    <scope>NUCLEOTIDE SEQUENCE [MRNA] (ISOFORMS A AND B)</scope>
    <scope>FUNCTION</scope>
    <scope>TISSUE SPECIFICITY</scope>
    <scope>DEVELOPMENTAL STAGE</scope>
    <scope>SUBCELLULAR LOCATION</scope>
</reference>
<reference key="2">
    <citation type="journal article" date="2000" name="Science">
        <title>The genome sequence of Drosophila melanogaster.</title>
        <authorList>
            <person name="Adams M.D."/>
            <person name="Celniker S.E."/>
            <person name="Holt R.A."/>
            <person name="Evans C.A."/>
            <person name="Gocayne J.D."/>
            <person name="Amanatides P.G."/>
            <person name="Scherer S.E."/>
            <person name="Li P.W."/>
            <person name="Hoskins R.A."/>
            <person name="Galle R.F."/>
            <person name="George R.A."/>
            <person name="Lewis S.E."/>
            <person name="Richards S."/>
            <person name="Ashburner M."/>
            <person name="Henderson S.N."/>
            <person name="Sutton G.G."/>
            <person name="Wortman J.R."/>
            <person name="Yandell M.D."/>
            <person name="Zhang Q."/>
            <person name="Chen L.X."/>
            <person name="Brandon R.C."/>
            <person name="Rogers Y.-H.C."/>
            <person name="Blazej R.G."/>
            <person name="Champe M."/>
            <person name="Pfeiffer B.D."/>
            <person name="Wan K.H."/>
            <person name="Doyle C."/>
            <person name="Baxter E.G."/>
            <person name="Helt G."/>
            <person name="Nelson C.R."/>
            <person name="Miklos G.L.G."/>
            <person name="Abril J.F."/>
            <person name="Agbayani A."/>
            <person name="An H.-J."/>
            <person name="Andrews-Pfannkoch C."/>
            <person name="Baldwin D."/>
            <person name="Ballew R.M."/>
            <person name="Basu A."/>
            <person name="Baxendale J."/>
            <person name="Bayraktaroglu L."/>
            <person name="Beasley E.M."/>
            <person name="Beeson K.Y."/>
            <person name="Benos P.V."/>
            <person name="Berman B.P."/>
            <person name="Bhandari D."/>
            <person name="Bolshakov S."/>
            <person name="Borkova D."/>
            <person name="Botchan M.R."/>
            <person name="Bouck J."/>
            <person name="Brokstein P."/>
            <person name="Brottier P."/>
            <person name="Burtis K.C."/>
            <person name="Busam D.A."/>
            <person name="Butler H."/>
            <person name="Cadieu E."/>
            <person name="Center A."/>
            <person name="Chandra I."/>
            <person name="Cherry J.M."/>
            <person name="Cawley S."/>
            <person name="Dahlke C."/>
            <person name="Davenport L.B."/>
            <person name="Davies P."/>
            <person name="de Pablos B."/>
            <person name="Delcher A."/>
            <person name="Deng Z."/>
            <person name="Mays A.D."/>
            <person name="Dew I."/>
            <person name="Dietz S.M."/>
            <person name="Dodson K."/>
            <person name="Doup L.E."/>
            <person name="Downes M."/>
            <person name="Dugan-Rocha S."/>
            <person name="Dunkov B.C."/>
            <person name="Dunn P."/>
            <person name="Durbin K.J."/>
            <person name="Evangelista C.C."/>
            <person name="Ferraz C."/>
            <person name="Ferriera S."/>
            <person name="Fleischmann W."/>
            <person name="Fosler C."/>
            <person name="Gabrielian A.E."/>
            <person name="Garg N.S."/>
            <person name="Gelbart W.M."/>
            <person name="Glasser K."/>
            <person name="Glodek A."/>
            <person name="Gong F."/>
            <person name="Gorrell J.H."/>
            <person name="Gu Z."/>
            <person name="Guan P."/>
            <person name="Harris M."/>
            <person name="Harris N.L."/>
            <person name="Harvey D.A."/>
            <person name="Heiman T.J."/>
            <person name="Hernandez J.R."/>
            <person name="Houck J."/>
            <person name="Hostin D."/>
            <person name="Houston K.A."/>
            <person name="Howland T.J."/>
            <person name="Wei M.-H."/>
            <person name="Ibegwam C."/>
            <person name="Jalali M."/>
            <person name="Kalush F."/>
            <person name="Karpen G.H."/>
            <person name="Ke Z."/>
            <person name="Kennison J.A."/>
            <person name="Ketchum K.A."/>
            <person name="Kimmel B.E."/>
            <person name="Kodira C.D."/>
            <person name="Kraft C.L."/>
            <person name="Kravitz S."/>
            <person name="Kulp D."/>
            <person name="Lai Z."/>
            <person name="Lasko P."/>
            <person name="Lei Y."/>
            <person name="Levitsky A.A."/>
            <person name="Li J.H."/>
            <person name="Li Z."/>
            <person name="Liang Y."/>
            <person name="Lin X."/>
            <person name="Liu X."/>
            <person name="Mattei B."/>
            <person name="McIntosh T.C."/>
            <person name="McLeod M.P."/>
            <person name="McPherson D."/>
            <person name="Merkulov G."/>
            <person name="Milshina N.V."/>
            <person name="Mobarry C."/>
            <person name="Morris J."/>
            <person name="Moshrefi A."/>
            <person name="Mount S.M."/>
            <person name="Moy M."/>
            <person name="Murphy B."/>
            <person name="Murphy L."/>
            <person name="Muzny D.M."/>
            <person name="Nelson D.L."/>
            <person name="Nelson D.R."/>
            <person name="Nelson K.A."/>
            <person name="Nixon K."/>
            <person name="Nusskern D.R."/>
            <person name="Pacleb J.M."/>
            <person name="Palazzolo M."/>
            <person name="Pittman G.S."/>
            <person name="Pan S."/>
            <person name="Pollard J."/>
            <person name="Puri V."/>
            <person name="Reese M.G."/>
            <person name="Reinert K."/>
            <person name="Remington K."/>
            <person name="Saunders R.D.C."/>
            <person name="Scheeler F."/>
            <person name="Shen H."/>
            <person name="Shue B.C."/>
            <person name="Siden-Kiamos I."/>
            <person name="Simpson M."/>
            <person name="Skupski M.P."/>
            <person name="Smith T.J."/>
            <person name="Spier E."/>
            <person name="Spradling A.C."/>
            <person name="Stapleton M."/>
            <person name="Strong R."/>
            <person name="Sun E."/>
            <person name="Svirskas R."/>
            <person name="Tector C."/>
            <person name="Turner R."/>
            <person name="Venter E."/>
            <person name="Wang A.H."/>
            <person name="Wang X."/>
            <person name="Wang Z.-Y."/>
            <person name="Wassarman D.A."/>
            <person name="Weinstock G.M."/>
            <person name="Weissenbach J."/>
            <person name="Williams S.M."/>
            <person name="Woodage T."/>
            <person name="Worley K.C."/>
            <person name="Wu D."/>
            <person name="Yang S."/>
            <person name="Yao Q.A."/>
            <person name="Ye J."/>
            <person name="Yeh R.-F."/>
            <person name="Zaveri J.S."/>
            <person name="Zhan M."/>
            <person name="Zhang G."/>
            <person name="Zhao Q."/>
            <person name="Zheng L."/>
            <person name="Zheng X.H."/>
            <person name="Zhong F.N."/>
            <person name="Zhong W."/>
            <person name="Zhou X."/>
            <person name="Zhu S.C."/>
            <person name="Zhu X."/>
            <person name="Smith H.O."/>
            <person name="Gibbs R.A."/>
            <person name="Myers E.W."/>
            <person name="Rubin G.M."/>
            <person name="Venter J.C."/>
        </authorList>
    </citation>
    <scope>NUCLEOTIDE SEQUENCE [LARGE SCALE GENOMIC DNA]</scope>
    <source>
        <strain>Berkeley</strain>
    </source>
</reference>
<reference key="3">
    <citation type="journal article" date="2002" name="Genome Biol.">
        <title>Annotation of the Drosophila melanogaster euchromatic genome: a systematic review.</title>
        <authorList>
            <person name="Misra S."/>
            <person name="Crosby M.A."/>
            <person name="Mungall C.J."/>
            <person name="Matthews B.B."/>
            <person name="Campbell K.S."/>
            <person name="Hradecky P."/>
            <person name="Huang Y."/>
            <person name="Kaminker J.S."/>
            <person name="Millburn G.H."/>
            <person name="Prochnik S.E."/>
            <person name="Smith C.D."/>
            <person name="Tupy J.L."/>
            <person name="Whitfield E.J."/>
            <person name="Bayraktaroglu L."/>
            <person name="Berman B.P."/>
            <person name="Bettencourt B.R."/>
            <person name="Celniker S.E."/>
            <person name="de Grey A.D.N.J."/>
            <person name="Drysdale R.A."/>
            <person name="Harris N.L."/>
            <person name="Richter J."/>
            <person name="Russo S."/>
            <person name="Schroeder A.J."/>
            <person name="Shu S.Q."/>
            <person name="Stapleton M."/>
            <person name="Yamada C."/>
            <person name="Ashburner M."/>
            <person name="Gelbart W.M."/>
            <person name="Rubin G.M."/>
            <person name="Lewis S.E."/>
        </authorList>
    </citation>
    <scope>GENOME REANNOTATION</scope>
    <scope>ALTERNATIVE SPLICING (ISOFORMS AND B)</scope>
    <source>
        <strain>Berkeley</strain>
    </source>
</reference>
<reference key="4">
    <citation type="journal article" date="2002" name="Genome Biol.">
        <title>A Drosophila full-length cDNA resource.</title>
        <authorList>
            <person name="Stapleton M."/>
            <person name="Carlson J.W."/>
            <person name="Brokstein P."/>
            <person name="Yu C."/>
            <person name="Champe M."/>
            <person name="George R.A."/>
            <person name="Guarin H."/>
            <person name="Kronmiller B."/>
            <person name="Pacleb J.M."/>
            <person name="Park S."/>
            <person name="Wan K.H."/>
            <person name="Rubin G.M."/>
            <person name="Celniker S.E."/>
        </authorList>
    </citation>
    <scope>NUCLEOTIDE SEQUENCE [LARGE SCALE MRNA] OF 782-2046 (ISOFORM A)</scope>
    <source>
        <strain>Berkeley</strain>
        <tissue>Embryo</tissue>
    </source>
</reference>
<reference key="5">
    <citation type="journal article" date="2004" name="Science">
        <title>Acetylation by Tip60 is required for selective histone variant exchange at DNA lesions.</title>
        <authorList>
            <person name="Kusch T."/>
            <person name="Florens L."/>
            <person name="Macdonald W.H."/>
            <person name="Swanson S.K."/>
            <person name="Glaser R.L."/>
            <person name="Yates J.R. III"/>
            <person name="Abmayr S.M."/>
            <person name="Washburn M.P."/>
            <person name="Workman J.L."/>
        </authorList>
    </citation>
    <scope>FUNCTION</scope>
    <scope>IDENTIFICATION IN THE TIP60 COMPLEX</scope>
</reference>
<reference key="6">
    <citation type="journal article" date="2005" name="Mol. Cell. Biol.">
        <title>Human SRCAP and Drosophila melanogaster DOM are homologs that function in the notch signaling pathway.</title>
        <authorList>
            <person name="Eissenberg J.C."/>
            <person name="Wong M."/>
            <person name="Chrivia J.C."/>
        </authorList>
    </citation>
    <scope>FUNCTION</scope>
</reference>
<reference key="7">
    <citation type="journal article" date="2005" name="Science">
        <title>Stem cell self-renewal controlled by chromatin remodeling factors.</title>
        <authorList>
            <person name="Xi R."/>
            <person name="Xie T."/>
        </authorList>
    </citation>
    <scope>FUNCTION</scope>
    <scope>TISSUE SPECIFICITY</scope>
</reference>
<reference key="8">
    <citation type="journal article" date="2006" name="Mol. Cell. Biol.">
        <title>Nipped-A, the Tra1/TRRAP subunit of the Drosophila SAGA and Tip60 complexes, has multiple roles in Notch signaling during wing development.</title>
        <authorList>
            <person name="Gause M."/>
            <person name="Eissenberg J.C."/>
            <person name="Macrae A.F."/>
            <person name="Dorsett M."/>
            <person name="Misulovin Z."/>
            <person name="Dorsett D."/>
        </authorList>
    </citation>
    <scope>FUNCTION</scope>
</reference>
<reference key="9">
    <citation type="journal article" date="2007" name="Proc. Natl. Acad. Sci. U.S.A.">
        <title>A genome-wide RNA interference screen identifies putative chromatin regulators essential for E2F repression.</title>
        <authorList>
            <person name="Lu J."/>
            <person name="Ruhf M.-L."/>
            <person name="Perrimon N."/>
            <person name="Leder P."/>
        </authorList>
    </citation>
    <scope>FUNCTION</scope>
</reference>
<reference key="10">
    <citation type="journal article" date="2008" name="J. Proteome Res.">
        <title>Phosphoproteome analysis of Drosophila melanogaster embryos.</title>
        <authorList>
            <person name="Zhai B."/>
            <person name="Villen J."/>
            <person name="Beausoleil S.A."/>
            <person name="Mintseris J."/>
            <person name="Gygi S.P."/>
        </authorList>
    </citation>
    <scope>PHOSPHORYLATION [LARGE SCALE ANALYSIS] AT SER-656; SER-664; SER-666; THR-729; SER-733; SER-736; SER-744 AND THR-838</scope>
    <scope>IDENTIFICATION BY MASS SPECTROMETRY</scope>
    <source>
        <tissue>Embryo</tissue>
    </source>
</reference>
<gene>
    <name type="primary">dom</name>
    <name type="ORF">CG9696</name>
</gene>
<comment type="function">
    <text evidence="7 8 9 10 11 12">Mediates the ATP-dependent exchange of unmodified histone H2AV for its phosphorylated and acetylated form H2AVK5acS138ph, leading to transcriptional regulation of selected genes by chromatin remodeling. Involved in Notch signaling. Represses E2F target genes. Required for somatic stem cell self-renewal but not for germline stem cell self-renewal. Involved in oogenesis.</text>
</comment>
<comment type="subunit">
    <text evidence="8">Component of the Tip60 chromatin-remodeling complex which contains Domino, Tip60, Tra1, Brd8, E(Pc), DMAP1, Pontin, Reptin, Ing3, Act87E, BAP55, Mrg15, MrgBP, Gas41 and YL-1.</text>
</comment>
<comment type="subcellular location">
    <subcellularLocation>
        <location evidence="5 7">Nucleus</location>
    </subcellularLocation>
</comment>
<comment type="alternative products">
    <event type="alternative splicing"/>
    <isoform>
        <id>Q9NDJ2-1</id>
        <name>A</name>
        <sequence type="displayed"/>
    </isoform>
    <isoform>
        <id>Q9NDJ2-2</id>
        <name>B</name>
        <sequence type="described" ref="VSP_029443"/>
    </isoform>
</comment>
<comment type="tissue specificity">
    <text evidence="7 10">Isoform B is present at high levels in ovary, in follicle cells, nurse cells and oocyte. Isoform B is also present in germline and somatic stem cells from the germarium. Isoform A is undetectable in adult ovary (at protein level).</text>
</comment>
<comment type="developmental stage">
    <text evidence="7">Isoform A and isoform B are present in 0-12 hours embryonic extracts. During embryonic development, isoform A expression is restricted to the developing nervous system, whereas isoform B is ubiquitously expressed. During postembryonic development, isoform B is found in brain, imaginal disks, lymph glands and salivary glands and isoform A is found in some brain regions, photoreceptor cells and sensory organ precursors (at protein level).</text>
</comment>
<comment type="similarity">
    <text evidence="15">Belongs to the SNF2/RAD54 helicase family. SWR1 subfamily.</text>
</comment>
<comment type="sequence caution" evidence="15">
    <conflict type="erroneous initiation">
        <sequence resource="EMBL-CDS" id="AAL13882"/>
    </conflict>
</comment>
<organism>
    <name type="scientific">Drosophila melanogaster</name>
    <name type="common">Fruit fly</name>
    <dbReference type="NCBI Taxonomy" id="7227"/>
    <lineage>
        <taxon>Eukaryota</taxon>
        <taxon>Metazoa</taxon>
        <taxon>Ecdysozoa</taxon>
        <taxon>Arthropoda</taxon>
        <taxon>Hexapoda</taxon>
        <taxon>Insecta</taxon>
        <taxon>Pterygota</taxon>
        <taxon>Neoptera</taxon>
        <taxon>Endopterygota</taxon>
        <taxon>Diptera</taxon>
        <taxon>Brachycera</taxon>
        <taxon>Muscomorpha</taxon>
        <taxon>Ephydroidea</taxon>
        <taxon>Drosophilidae</taxon>
        <taxon>Drosophila</taxon>
        <taxon>Sophophora</taxon>
    </lineage>
</organism>
<evidence type="ECO:0000255" key="1"/>
<evidence type="ECO:0000255" key="2">
    <source>
        <dbReference type="PROSITE-ProRule" id="PRU00133"/>
    </source>
</evidence>
<evidence type="ECO:0000255" key="3">
    <source>
        <dbReference type="PROSITE-ProRule" id="PRU00541"/>
    </source>
</evidence>
<evidence type="ECO:0000255" key="4">
    <source>
        <dbReference type="PROSITE-ProRule" id="PRU00542"/>
    </source>
</evidence>
<evidence type="ECO:0000255" key="5">
    <source>
        <dbReference type="PROSITE-ProRule" id="PRU00549"/>
    </source>
</evidence>
<evidence type="ECO:0000256" key="6">
    <source>
        <dbReference type="SAM" id="MobiDB-lite"/>
    </source>
</evidence>
<evidence type="ECO:0000269" key="7">
    <source>
    </source>
</evidence>
<evidence type="ECO:0000269" key="8">
    <source>
    </source>
</evidence>
<evidence type="ECO:0000269" key="9">
    <source>
    </source>
</evidence>
<evidence type="ECO:0000269" key="10">
    <source>
    </source>
</evidence>
<evidence type="ECO:0000269" key="11">
    <source>
    </source>
</evidence>
<evidence type="ECO:0000269" key="12">
    <source>
    </source>
</evidence>
<evidence type="ECO:0000269" key="13">
    <source>
    </source>
</evidence>
<evidence type="ECO:0000303" key="14">
    <source>
    </source>
</evidence>
<evidence type="ECO:0000305" key="15"/>
<sequence length="3198" mass="350239">MNEGNSAGGGHEGLSPAPPAVPDRVTPHSTEISVAPANSTSTTVRAAGSVGAALPATRHHQHIATQVKGIASSSSKQQKQLASAQLPVPLSPLPQQQQQTAEATAAAAAPAHSNVSVSSSTIEASVLPPQAKRQRLDDNEDRTSAASIVGPAESSNIVSSLLPASVASSSEVGGLSSTALQDLNALKKRILQQKLQILRNLKERHLENVSEYFYLQNGGSMMDYPAWRKKTPTPQFISYSNANRIDQLIHEDKPSTSAAAAAAQNQKYTTQQTDSVESSLVSGIGTGATKGAPLDGNISNSTVKTNTQSQVPSKIGSFTESTPAATESNSSTTVPGTATSGAATSTSATSAEASGNVLAVEAEIKIPAVGATPVAISTKLPAAVVQLTQQGGTPLLPCNTSAGSTALRRPQGQNNASSGSAAASGGGGSLTPTPLYTGNGPAALGGSGGLTPGTPTSGSLLSPALGGGSGTPNSAAQEFSFKAKQEVYVMQRISELQREGLWTERRLPKLQEPSRPKAHWDYLLEEMVWLAADFAQERKWKKNAAKKCAKMVQKYFQDKATAAQRAEKAQELQLKRVASFIAREVKSFWSNVEKLVEYKHQTKIEEKRKQALDQHLSFIVDQTEKFSQQLVEGMNKSVADTPSLNSSRLTSPKRESDDDFRPESGSEDDEETIAKAEEDAADVKEEVTALAKESEMDFDDFLNDLPPGYLENRDKLMKEEQSSAIKTETPDDSDDSEFEAKEASDDDENTISKQEEAEQEIDHKKEIDELEADNDLSVEQLLAKYKSEQPPSPKRRKLAPRDPELDSDDDSTAVDSTEESEDAATEDEEDLSTVKTDTDMEEQDEQEDGLKSLMADADATSGAAGSGSTAGASGNKDDMLNDAAALAESLQPKGNTLSSTNVVTPVPFLLKHSLREYQHIGLDWLVTMNERKLNGILADEMGLGKTIQTIALLAHLACAKGNWGPHLIVVPSSVMLNWEMEFKKWCPGFKILTYYGSQKERKLKRVGWTKPNAFHVCITSYKLVVQDQQSFRRKKWKYLILDEAQNIKNFKSQRWQLLLNFSTERRLLLTGTPLQNDLMELWSLMHFLMPYVFSSHREFKEWFSNPMTGMIEGNMEYNETLITRLHKVIRPFLLRRLKKEVEKQMPKKYEHVITCRLSNRQRYLYEDFMSRAKTRETLQTGNLLSVINVLMQLRKVCNHPNMFEARPTISPFQMDGITFHTPRLVCDIMEYDPFTQINLETLNLLLLHLEQTMTAYVSHKSRLLAPPRKLIEDIDTAPLPAPRCPNGKYRFHIRVRSAELAQRIKLNAVKVGASPAMRLEGSKIMPMRNLLPSGRVLKRVSASINPVNMALKPVVINSVVTTTSSSTTASSPTGALSVLSNSKLLGARSQINAPTPAKVAKTMQDGKPFFYLTPATNSGAAGARLTLTSKTTASASTTTSRTTVTASTTSGQQLIRDPIVKDLATHVKSTVQKQSIANGKTEPEEETEAEDPYKVQELIQMRKEQRLAALKRMAMINRRRTDATPIYGEDCREAIQRCMQATRSLKRSTWQTRGYANCCTAMAHRNGWSLNHLLKSFEERCADLKPVFANFVIYVPSVCAPRIRRYVQNLSSTHWQHEQRIENIVDQALRPKLALLHPIISEMTTKFPDPRLIQYDCGKLQTMDRLLRQLKVNGHRVLIFTQMTKMLDVLEAFLNYHGHIYLRLDGSTRVEQRQILMERFNGDKRIFCFILSTRSGGVGINLTGADTVIFYDSDWNPTMDAQAQDRCHRIGQTRDVHIYRLVSERTIEVNILKKANQKRMLSDMAIEGGNFTTTYFKSSTIKDLFTMEQSEQDESSQEKSENKDRIVATTTLSDTPSTVVETEKQSLRAFEHALAAAEDEQDVQATKTAKAEVAADLAEFDENIPIATEDPNAEGGPQVELSKADLEMQNLVKQLSPIERYAMRFVEETGAAWTAEQLRAAEAELEAQKREWEANRLAAMHKEEELLKQETEAEEMLTYSRKDSSNQVWISRNTMEQMPMWCPPTPPQDNDNDIYIDYSLSFMYELEPIAETDLPPVYVRKEHKRSRTDAGYDGSRRPNKMRREDNYVPPRSLFDRPTPQLARLRRELKSQRFRGSFKPNMPIPGLKPQLPTKPLTEPEAMAEWCVFEDMAILHVLVNLQGLPCSLMLLSPGQTPNWDLVSEMVNFCSKTYRSARQCRWRYETHIQPREEGKVVESPKKQKKLKPTLRTEYLKSPLRYLRTTQLYVSDNNASFYKTMRSRFDSIKTAYLKKAPPPKRQFSAPSLMNPKHMEVLQEFGILNYDQPVSPQNIAAMKANKIREKQRGQQMSQPPVGVGVVQQMQQQSQQQQQPAPPPLPQQQQPQQVVQQVQQQQQQQQQQQQQQVVQQQLPTVSNVQQTLPVQQTVELVQQQPTTTTTVAVPAAGGQLQQLQIQHLTSSNVSPGQQTAILLHQPQQQLRTHPGQGGQSNTQQLVKTIVGTSSSLTAGQLQQLAQQSAVASGGQSSVSVVLTTPVQTLPSVVQPQIGSGAQIVSISSQTLPVNSSPQLGSIVQTQSLPQVVSVSTLPTVGTVLTTTANQPQQQHQTTAVTTLNTTMLRGQRIVSTAAGNTLQQRTTAGGQSIVSMPNLGQGASPSQFQTQLRLAAVPTSPATQTTQLVTTKGIPVSALQQGGKTTVIPVTQQSGGAHIQLYRQRSLKVLQTTTQAVPSGSAGATGATANLVQAGGTIIQASNMATHVTSQKVAVSGMPGTSTTVQAGNVVSSVQMHGQARTQFIKQMAAGKQQLQRQVVSADGTTTTTAAGDMLLVKRHNILAAQKAQQASGALFTTTTGQQQQQQQQQGQLPVAGQPQQVTQHQIASLVKASTAAAASGSSVNAGGVTVSATNPTVQAGSVNMTLPQLKPGSQIKVTMPNQMRHLQMQQQLTMPRKISRMTQLVSASGQPTATNIITTTGPQQQQQGVTVSGGGTLPTVASQQQQQQHQQKVGGGNSVQAQLLHIQNTKGLSNSVTMQQIQQVMRSGQQGTLATTNLVLGKTSVGRVIPVSVASQANQRQTIQVVSAASAQALAAGNLRTHVAGPSIASTLKVAAPGSAGGQTTQQTLIAALQHNQRQNASPVRLQTTAGGNLLAVVQQQQQQQHTSIAGPTAGPAEVMTITQTTTTLPTVGSLQQQQQQQQQQGGISQPTTQQVRKLVQKKILIRSEKE</sequence>
<feature type="chain" id="PRO_0000311238" description="Helicase domino">
    <location>
        <begin position="1"/>
        <end position="3198"/>
    </location>
</feature>
<feature type="domain" description="HSA" evidence="5">
    <location>
        <begin position="507"/>
        <end position="579"/>
    </location>
</feature>
<feature type="domain" description="Helicase ATP-binding" evidence="3">
    <location>
        <begin position="926"/>
        <end position="1091"/>
    </location>
</feature>
<feature type="domain" description="Helicase C-terminal" evidence="4">
    <location>
        <begin position="1662"/>
        <end position="1812"/>
    </location>
</feature>
<feature type="domain" description="Myb-like" evidence="2">
    <location>
        <begin position="2136"/>
        <end position="2205"/>
    </location>
</feature>
<feature type="region of interest" description="Disordered" evidence="6">
    <location>
        <begin position="1"/>
        <end position="27"/>
    </location>
</feature>
<feature type="region of interest" description="Disordered" evidence="6">
    <location>
        <begin position="93"/>
        <end position="112"/>
    </location>
</feature>
<feature type="region of interest" description="Disordered" evidence="6">
    <location>
        <begin position="119"/>
        <end position="148"/>
    </location>
</feature>
<feature type="region of interest" description="Disordered" evidence="6">
    <location>
        <begin position="256"/>
        <end position="350"/>
    </location>
</feature>
<feature type="region of interest" description="Disordered" evidence="6">
    <location>
        <begin position="391"/>
        <end position="474"/>
    </location>
</feature>
<feature type="region of interest" description="Disordered" evidence="6">
    <location>
        <begin position="635"/>
        <end position="848"/>
    </location>
</feature>
<feature type="region of interest" description="Disordered" evidence="6">
    <location>
        <begin position="1471"/>
        <end position="1492"/>
    </location>
</feature>
<feature type="region of interest" description="Disordered" evidence="6">
    <location>
        <begin position="1828"/>
        <end position="1856"/>
    </location>
</feature>
<feature type="region of interest" description="Disordered" evidence="6">
    <location>
        <begin position="2061"/>
        <end position="2100"/>
    </location>
</feature>
<feature type="region of interest" description="Disordered" evidence="6">
    <location>
        <begin position="2318"/>
        <end position="2362"/>
    </location>
</feature>
<feature type="coiled-coil region" evidence="1">
    <location>
        <begin position="187"/>
        <end position="212"/>
    </location>
</feature>
<feature type="coiled-coil region" evidence="1">
    <location>
        <begin position="666"/>
        <end position="696"/>
    </location>
</feature>
<feature type="coiled-coil region" evidence="1">
    <location>
        <begin position="741"/>
        <end position="784"/>
    </location>
</feature>
<feature type="coiled-coil region" evidence="1">
    <location>
        <begin position="1951"/>
        <end position="1996"/>
    </location>
</feature>
<feature type="compositionally biased region" description="Gly residues" evidence="6">
    <location>
        <begin position="1"/>
        <end position="12"/>
    </location>
</feature>
<feature type="compositionally biased region" description="Basic and acidic residues" evidence="6">
    <location>
        <begin position="134"/>
        <end position="143"/>
    </location>
</feature>
<feature type="compositionally biased region" description="Polar residues" evidence="6">
    <location>
        <begin position="264"/>
        <end position="281"/>
    </location>
</feature>
<feature type="compositionally biased region" description="Polar residues" evidence="6">
    <location>
        <begin position="297"/>
        <end position="329"/>
    </location>
</feature>
<feature type="compositionally biased region" description="Low complexity" evidence="6">
    <location>
        <begin position="330"/>
        <end position="350"/>
    </location>
</feature>
<feature type="compositionally biased region" description="Polar residues" evidence="6">
    <location>
        <begin position="391"/>
        <end position="404"/>
    </location>
</feature>
<feature type="compositionally biased region" description="Low complexity" evidence="6">
    <location>
        <begin position="452"/>
        <end position="464"/>
    </location>
</feature>
<feature type="compositionally biased region" description="Polar residues" evidence="6">
    <location>
        <begin position="638"/>
        <end position="650"/>
    </location>
</feature>
<feature type="compositionally biased region" description="Basic and acidic residues" evidence="6">
    <location>
        <begin position="652"/>
        <end position="664"/>
    </location>
</feature>
<feature type="compositionally biased region" description="Basic and acidic residues" evidence="6">
    <location>
        <begin position="672"/>
        <end position="695"/>
    </location>
</feature>
<feature type="compositionally biased region" description="Basic and acidic residues" evidence="6">
    <location>
        <begin position="711"/>
        <end position="721"/>
    </location>
</feature>
<feature type="compositionally biased region" description="Basic and acidic residues" evidence="6">
    <location>
        <begin position="753"/>
        <end position="767"/>
    </location>
</feature>
<feature type="compositionally biased region" description="Acidic residues" evidence="6">
    <location>
        <begin position="805"/>
        <end position="831"/>
    </location>
</feature>
<feature type="compositionally biased region" description="Basic and acidic residues" evidence="6">
    <location>
        <begin position="1836"/>
        <end position="1846"/>
    </location>
</feature>
<feature type="compositionally biased region" description="Basic and acidic residues" evidence="6">
    <location>
        <begin position="2067"/>
        <end position="2086"/>
    </location>
</feature>
<feature type="compositionally biased region" description="Low complexity" evidence="6">
    <location>
        <begin position="2325"/>
        <end position="2349"/>
    </location>
</feature>
<feature type="binding site" evidence="3">
    <location>
        <begin position="939"/>
        <end position="946"/>
    </location>
    <ligand>
        <name>ATP</name>
        <dbReference type="ChEBI" id="CHEBI:30616"/>
    </ligand>
</feature>
<feature type="modified residue" description="Phosphoserine" evidence="13">
    <location>
        <position position="656"/>
    </location>
</feature>
<feature type="modified residue" description="Phosphoserine" evidence="13">
    <location>
        <position position="664"/>
    </location>
</feature>
<feature type="modified residue" description="Phosphoserine" evidence="13">
    <location>
        <position position="666"/>
    </location>
</feature>
<feature type="modified residue" description="Phosphothreonine" evidence="13">
    <location>
        <position position="729"/>
    </location>
</feature>
<feature type="modified residue" description="Phosphoserine" evidence="13">
    <location>
        <position position="733"/>
    </location>
</feature>
<feature type="modified residue" description="Phosphoserine" evidence="13">
    <location>
        <position position="736"/>
    </location>
</feature>
<feature type="modified residue" description="Phosphoserine" evidence="13">
    <location>
        <position position="744"/>
    </location>
</feature>
<feature type="modified residue" description="Phosphothreonine" evidence="13">
    <location>
        <position position="838"/>
    </location>
</feature>
<feature type="splice variant" id="VSP_029443" description="In isoform B." evidence="14">
    <original>WISRNTMEQMPMWCPPTPPQDNDNDIYIDYSLSFMYELEPIAETDLPPVYVRKEHKRSRTDAGYDGSRRPNKMRREDNYVPPRSLFDRPTPQLARLRRELKSQRFRGSFKPNMPIPGLKPQLPTKPLTEPEAMAEWCVFEDMAILHVLVNLQGLPCSLMLLSPGQTPNWDLVSEMVNFCSKTYRSARQCRWRYETHIQPREEGKVVESPKKQKKLKPTLRTEYLKSPLRYLRTTQLYVSDNNASFYKTMRSRFDSIKTAYLKKAPPPKRQFSAPSLMNPKHMEVLQEFGILNYDQPVSPQNIAAMKANKIREKQRGQQMSQPPVGVGVVQQMQQQSQQQQQPAPPPLPQQQQPQQVVQQVQQQQQQQQQQQQQQVVQQQLPTVSNVQQTLPVQQTVELVQQQPTTTTTVAVPAAGGQLQQLQIQHLTSSNVSPGQQTAILLHQPQQQLRTHPGQGGQSNTQQLVKTIVGTSSSLTAGQLQQLAQQSAVASGGQSSVSVVLTTPVQTLPSVVQPQIGSGAQIVSISSQTLPVNSSPQLGSIVQTQSLPQVVSVSTLPTVGTVLTTTANQPQQQHQTTAVTTLNTTMLRGQRIVSTAAGNTLQQRTTAGGQSIVSMPNLGQGASPSQFQTQLRLAAVPTSPATQTTQLVTTKGIPVSALQQGGKTTVIPVTQQSGGAHIQLYRQRSLKVLQTTTQAVPSGSAGATGATANLVQAGGTIIQASNMATHVTSQKVAVSGMPGTSTTVQAGNVVSSVQMHGQARTQFIKQMAAGKQQLQRQVVSADGTTTTTAAGDMLLVKRHNILAAQKAQQASGALFTTTTGQQQQQQQQQGQLPVAGQPQQVTQHQIASLVKASTAAAASGSSVNAGGVTVSATNPTVQAGSVNMTLPQLKPGSQIKVTMPNQMRHLQMQQQLTMPRKISRMTQLVSASGQPTATNIITTTGPQQQQQGVTVSGGGTLPTVASQQQQQQHQQKVGGGNSVQAQLLHIQNTKGLSNSVTMQQIQQVMRSGQQGTLATTNLVLGKTSVGRVIPVSVASQANQRQTIQVVSAASAQALAAGNLRTHVAGPSIASTLKVAAPGSAGGQTTQQTLIAALQHNQRQNASPVRLQTTAGGNLLAVVQQQQQQQHTSIAGPTAGPAEVMTITQTTTTLPTVGSLQQQQQQQQQQGGISQPTTQQVRKLVQKKILIRSEKE</original>
    <variation>NTKTDSNSNKRRLVRENRRNSAQKLSRSVSSHSTGSNNKNSKSATTRGNSQNSLNQTVPVGSGISRVNRTGAGVSSSSRGKSNSTKSTGKGTDAAPQVRRQTRLHSLGAVNMASARTPPTRKTTRTALAASAAASTLEDASLIVEERPKRQSANIAMSKMMKTPFKQNVPSNISIKTTPPKRGRRDSVAAAATRSKLLERRATIAAPLKHMDDESDQDEEEQEEQESEEDTEGEEANATVDDDEEGEEELASLDEETIQTGSQTNDEEDDDEEEVGEEGMVDIDTEDSEADVKSSSTYGTAADGKPEEAESLDGWDAHDQVQDTTMTSSTYYNVSEESDTDEHHDSKAEAKEPPQNSDKSDESEAVGHTPRTRSRGTVKINLWTLDVSPVANALNKSSANRSLKKAPRTESTPKESQSEPRRKITQPKLPKKEETNNKSNSNIGTLHRWISKSPRVMLRSTPVTAASASSSAAVSGVSGGNASSSGTAR</variation>
    <location>
        <begin position="2009"/>
        <end position="3198"/>
    </location>
</feature>
<feature type="sequence conflict" description="In Ref. 1; AAF82185/AAK53539." evidence="15" ref="1">
    <original>V</original>
    <variation>G</variation>
    <location>
        <position position="1598"/>
    </location>
</feature>
<feature type="sequence conflict" description="In Ref. 1; AAF82185/AAK53539." evidence="15" ref="1">
    <original>SS</original>
    <variation>LL</variation>
    <location>
        <begin position="1611"/>
        <end position="1612"/>
    </location>
</feature>
<feature type="sequence conflict" description="In Ref. 1; AAF82185/AAK53539." evidence="15" ref="1">
    <original>Q</original>
    <variation>P</variation>
    <location>
        <position position="1619"/>
    </location>
</feature>
<feature type="sequence conflict" description="In Ref. 1; AAF82185/AAK53539." evidence="15" ref="1">
    <original>P</original>
    <variation>A</variation>
    <location>
        <position position="1631"/>
    </location>
</feature>
<feature type="sequence conflict" description="In Ref. 1; AAF82185." evidence="15" ref="1">
    <original>V</original>
    <variation>G</variation>
    <location>
        <position position="2157"/>
    </location>
</feature>
<feature type="sequence conflict" description="In Ref. 1; AAF82185." evidence="15" ref="1">
    <original>R</original>
    <variation>P</variation>
    <location>
        <position position="2198"/>
    </location>
</feature>
<feature type="sequence conflict" description="In Ref. 1; AAF82185." evidence="15" ref="1">
    <original>M</original>
    <variation>MQQQSQQ</variation>
    <location>
        <position position="2340"/>
    </location>
</feature>
<feature type="sequence conflict" description="In Ref. 1; AAF82185." evidence="15" ref="1">
    <location>
        <begin position="2369"/>
        <end position="2371"/>
    </location>
</feature>
<feature type="sequence conflict" description="In Ref. 1; AAF82185." evidence="15" ref="1">
    <original>T</original>
    <variation>S</variation>
    <location>
        <position position="2514"/>
    </location>
</feature>
<feature type="sequence conflict" description="In Ref. 1; AAK53539." evidence="15" ref="1">
    <original>P</original>
    <variation>A</variation>
    <location sequence="Q9NDJ2-2">
        <position position="2127"/>
    </location>
</feature>
<feature type="sequence conflict" description="In Ref. 1; AAK53539." evidence="15" ref="1">
    <original>K</original>
    <variation>N</variation>
    <location sequence="Q9NDJ2-2">
        <position position="2174"/>
    </location>
</feature>
<feature type="sequence conflict" description="In Ref. 1; AAK53539." evidence="15" ref="1">
    <original>N</original>
    <variation>T</variation>
    <location sequence="Q9NDJ2-2">
        <position position="2180"/>
    </location>
</feature>
<feature type="sequence conflict" description="In Ref. 1; AAK53539." evidence="15" ref="1">
    <original>E</original>
    <variation>D</variation>
    <location sequence="Q9NDJ2-2">
        <position position="2222"/>
    </location>
</feature>
<feature type="sequence conflict" description="In Ref. 1; AAK53539." evidence="15" ref="1">
    <original>E</original>
    <variation>D</variation>
    <location sequence="Q9NDJ2-2">
        <position position="2229"/>
    </location>
</feature>
<feature type="sequence conflict" description="In Ref. 1; AAK53539." evidence="15" ref="1">
    <original>G</original>
    <variation>E</variation>
    <location sequence="Q9NDJ2-2">
        <position position="2287"/>
    </location>
</feature>
<feature type="sequence conflict" description="In Ref. 1; AAK53539." evidence="15" ref="1">
    <original>V</original>
    <variation>G</variation>
    <location sequence="Q9NDJ2-2">
        <position position="2471"/>
    </location>
</feature>
<feature type="sequence conflict" description="In Ref. 1; AAK53539." evidence="15" ref="1">
    <original>A</original>
    <variation>T</variation>
    <location sequence="Q9NDJ2-2">
        <position position="2474"/>
    </location>
</feature>
<proteinExistence type="evidence at protein level"/>
<name>DOM_DROME</name>
<protein>
    <recommendedName>
        <fullName>Helicase domino</fullName>
        <ecNumber>3.6.4.-</ecNumber>
    </recommendedName>
</protein>
<accession>Q9NDJ2</accession>
<accession>Q7YZ94</accession>
<accession>Q95TN6</accession>
<accession>Q968U6</accession>
<accession>Q9I7V8</accession>
<keyword id="KW-0025">Alternative splicing</keyword>
<keyword id="KW-0067">ATP-binding</keyword>
<keyword id="KW-0131">Cell cycle</keyword>
<keyword id="KW-0156">Chromatin regulator</keyword>
<keyword id="KW-0175">Coiled coil</keyword>
<keyword id="KW-0217">Developmental protein</keyword>
<keyword id="KW-0221">Differentiation</keyword>
<keyword id="KW-0238">DNA-binding</keyword>
<keyword id="KW-0347">Helicase</keyword>
<keyword id="KW-0378">Hydrolase</keyword>
<keyword id="KW-0547">Nucleotide-binding</keyword>
<keyword id="KW-0539">Nucleus</keyword>
<keyword id="KW-0896">Oogenesis</keyword>
<keyword id="KW-0597">Phosphoprotein</keyword>
<keyword id="KW-1185">Reference proteome</keyword>
<keyword id="KW-0804">Transcription</keyword>
<keyword id="KW-0805">Transcription regulation</keyword>